<protein>
    <recommendedName>
        <fullName evidence="2">Uncharacterized protein encoded by LINC02881</fullName>
    </recommendedName>
    <alternativeName>
        <fullName evidence="3">Long intergenic non-protein coding RNA 2881</fullName>
    </alternativeName>
</protein>
<organism>
    <name type="scientific">Homo sapiens</name>
    <name type="common">Human</name>
    <dbReference type="NCBI Taxonomy" id="9606"/>
    <lineage>
        <taxon>Eukaryota</taxon>
        <taxon>Metazoa</taxon>
        <taxon>Chordata</taxon>
        <taxon>Craniata</taxon>
        <taxon>Vertebrata</taxon>
        <taxon>Euteleostomi</taxon>
        <taxon>Mammalia</taxon>
        <taxon>Eutheria</taxon>
        <taxon>Euarchontoglires</taxon>
        <taxon>Primates</taxon>
        <taxon>Haplorrhini</taxon>
        <taxon>Catarrhini</taxon>
        <taxon>Hominidae</taxon>
        <taxon>Homo</taxon>
    </lineage>
</organism>
<keyword id="KW-1185">Reference proteome</keyword>
<evidence type="ECO:0000256" key="1">
    <source>
        <dbReference type="SAM" id="MobiDB-lite"/>
    </source>
</evidence>
<evidence type="ECO:0000305" key="2"/>
<evidence type="ECO:0000312" key="3">
    <source>
        <dbReference type="HGNC" id="HGNC:51236"/>
    </source>
</evidence>
<comment type="caution">
    <text evidence="2">Product of a dubious CDS prediction. May be a non-coding RNA.</text>
</comment>
<feature type="chain" id="PRO_0000433164" description="Uncharacterized protein encoded by LINC02881">
    <location>
        <begin position="1"/>
        <end position="130"/>
    </location>
</feature>
<feature type="region of interest" description="Disordered" evidence="1">
    <location>
        <begin position="1"/>
        <end position="62"/>
    </location>
</feature>
<feature type="compositionally biased region" description="Pro residues" evidence="1">
    <location>
        <begin position="21"/>
        <end position="30"/>
    </location>
</feature>
<accession>B7Z368</accession>
<name>CJ142_HUMAN</name>
<gene>
    <name evidence="3" type="primary">LINC02881</name>
    <name type="synonym">C10orf142</name>
</gene>
<proteinExistence type="uncertain"/>
<reference key="1">
    <citation type="journal article" date="2004" name="Nat. Genet.">
        <title>Complete sequencing and characterization of 21,243 full-length human cDNAs.</title>
        <authorList>
            <person name="Ota T."/>
            <person name="Suzuki Y."/>
            <person name="Nishikawa T."/>
            <person name="Otsuki T."/>
            <person name="Sugiyama T."/>
            <person name="Irie R."/>
            <person name="Wakamatsu A."/>
            <person name="Hayashi K."/>
            <person name="Sato H."/>
            <person name="Nagai K."/>
            <person name="Kimura K."/>
            <person name="Makita H."/>
            <person name="Sekine M."/>
            <person name="Obayashi M."/>
            <person name="Nishi T."/>
            <person name="Shibahara T."/>
            <person name="Tanaka T."/>
            <person name="Ishii S."/>
            <person name="Yamamoto J."/>
            <person name="Saito K."/>
            <person name="Kawai Y."/>
            <person name="Isono Y."/>
            <person name="Nakamura Y."/>
            <person name="Nagahari K."/>
            <person name="Murakami K."/>
            <person name="Yasuda T."/>
            <person name="Iwayanagi T."/>
            <person name="Wagatsuma M."/>
            <person name="Shiratori A."/>
            <person name="Sudo H."/>
            <person name="Hosoiri T."/>
            <person name="Kaku Y."/>
            <person name="Kodaira H."/>
            <person name="Kondo H."/>
            <person name="Sugawara M."/>
            <person name="Takahashi M."/>
            <person name="Kanda K."/>
            <person name="Yokoi T."/>
            <person name="Furuya T."/>
            <person name="Kikkawa E."/>
            <person name="Omura Y."/>
            <person name="Abe K."/>
            <person name="Kamihara K."/>
            <person name="Katsuta N."/>
            <person name="Sato K."/>
            <person name="Tanikawa M."/>
            <person name="Yamazaki M."/>
            <person name="Ninomiya K."/>
            <person name="Ishibashi T."/>
            <person name="Yamashita H."/>
            <person name="Murakawa K."/>
            <person name="Fujimori K."/>
            <person name="Tanai H."/>
            <person name="Kimata M."/>
            <person name="Watanabe M."/>
            <person name="Hiraoka S."/>
            <person name="Chiba Y."/>
            <person name="Ishida S."/>
            <person name="Ono Y."/>
            <person name="Takiguchi S."/>
            <person name="Watanabe S."/>
            <person name="Yosida M."/>
            <person name="Hotuta T."/>
            <person name="Kusano J."/>
            <person name="Kanehori K."/>
            <person name="Takahashi-Fujii A."/>
            <person name="Hara H."/>
            <person name="Tanase T.-O."/>
            <person name="Nomura Y."/>
            <person name="Togiya S."/>
            <person name="Komai F."/>
            <person name="Hara R."/>
            <person name="Takeuchi K."/>
            <person name="Arita M."/>
            <person name="Imose N."/>
            <person name="Musashino K."/>
            <person name="Yuuki H."/>
            <person name="Oshima A."/>
            <person name="Sasaki N."/>
            <person name="Aotsuka S."/>
            <person name="Yoshikawa Y."/>
            <person name="Matsunawa H."/>
            <person name="Ichihara T."/>
            <person name="Shiohata N."/>
            <person name="Sano S."/>
            <person name="Moriya S."/>
            <person name="Momiyama H."/>
            <person name="Satoh N."/>
            <person name="Takami S."/>
            <person name="Terashima Y."/>
            <person name="Suzuki O."/>
            <person name="Nakagawa S."/>
            <person name="Senoh A."/>
            <person name="Mizoguchi H."/>
            <person name="Goto Y."/>
            <person name="Shimizu F."/>
            <person name="Wakebe H."/>
            <person name="Hishigaki H."/>
            <person name="Watanabe T."/>
            <person name="Sugiyama A."/>
            <person name="Takemoto M."/>
            <person name="Kawakami B."/>
            <person name="Yamazaki M."/>
            <person name="Watanabe K."/>
            <person name="Kumagai A."/>
            <person name="Itakura S."/>
            <person name="Fukuzumi Y."/>
            <person name="Fujimori Y."/>
            <person name="Komiyama M."/>
            <person name="Tashiro H."/>
            <person name="Tanigami A."/>
            <person name="Fujiwara T."/>
            <person name="Ono T."/>
            <person name="Yamada K."/>
            <person name="Fujii Y."/>
            <person name="Ozaki K."/>
            <person name="Hirao M."/>
            <person name="Ohmori Y."/>
            <person name="Kawabata A."/>
            <person name="Hikiji T."/>
            <person name="Kobatake N."/>
            <person name="Inagaki H."/>
            <person name="Ikema Y."/>
            <person name="Okamoto S."/>
            <person name="Okitani R."/>
            <person name="Kawakami T."/>
            <person name="Noguchi S."/>
            <person name="Itoh T."/>
            <person name="Shigeta K."/>
            <person name="Senba T."/>
            <person name="Matsumura K."/>
            <person name="Nakajima Y."/>
            <person name="Mizuno T."/>
            <person name="Morinaga M."/>
            <person name="Sasaki M."/>
            <person name="Togashi T."/>
            <person name="Oyama M."/>
            <person name="Hata H."/>
            <person name="Watanabe M."/>
            <person name="Komatsu T."/>
            <person name="Mizushima-Sugano J."/>
            <person name="Satoh T."/>
            <person name="Shirai Y."/>
            <person name="Takahashi Y."/>
            <person name="Nakagawa K."/>
            <person name="Okumura K."/>
            <person name="Nagase T."/>
            <person name="Nomura N."/>
            <person name="Kikuchi H."/>
            <person name="Masuho Y."/>
            <person name="Yamashita R."/>
            <person name="Nakai K."/>
            <person name="Yada T."/>
            <person name="Nakamura Y."/>
            <person name="Ohara O."/>
            <person name="Isogai T."/>
            <person name="Sugano S."/>
        </authorList>
    </citation>
    <scope>NUCLEOTIDE SEQUENCE [LARGE SCALE MRNA]</scope>
    <source>
        <tissue>Hippocampus</tissue>
    </source>
</reference>
<reference key="2">
    <citation type="journal article" date="2004" name="Nature">
        <title>The DNA sequence and comparative analysis of human chromosome 10.</title>
        <authorList>
            <person name="Deloukas P."/>
            <person name="Earthrowl M.E."/>
            <person name="Grafham D.V."/>
            <person name="Rubenfield M."/>
            <person name="French L."/>
            <person name="Steward C.A."/>
            <person name="Sims S.K."/>
            <person name="Jones M.C."/>
            <person name="Searle S."/>
            <person name="Scott C."/>
            <person name="Howe K."/>
            <person name="Hunt S.E."/>
            <person name="Andrews T.D."/>
            <person name="Gilbert J.G.R."/>
            <person name="Swarbreck D."/>
            <person name="Ashurst J.L."/>
            <person name="Taylor A."/>
            <person name="Battles J."/>
            <person name="Bird C.P."/>
            <person name="Ainscough R."/>
            <person name="Almeida J.P."/>
            <person name="Ashwell R.I.S."/>
            <person name="Ambrose K.D."/>
            <person name="Babbage A.K."/>
            <person name="Bagguley C.L."/>
            <person name="Bailey J."/>
            <person name="Banerjee R."/>
            <person name="Bates K."/>
            <person name="Beasley H."/>
            <person name="Bray-Allen S."/>
            <person name="Brown A.J."/>
            <person name="Brown J.Y."/>
            <person name="Burford D.C."/>
            <person name="Burrill W."/>
            <person name="Burton J."/>
            <person name="Cahill P."/>
            <person name="Camire D."/>
            <person name="Carter N.P."/>
            <person name="Chapman J.C."/>
            <person name="Clark S.Y."/>
            <person name="Clarke G."/>
            <person name="Clee C.M."/>
            <person name="Clegg S."/>
            <person name="Corby N."/>
            <person name="Coulson A."/>
            <person name="Dhami P."/>
            <person name="Dutta I."/>
            <person name="Dunn M."/>
            <person name="Faulkner L."/>
            <person name="Frankish A."/>
            <person name="Frankland J.A."/>
            <person name="Garner P."/>
            <person name="Garnett J."/>
            <person name="Gribble S."/>
            <person name="Griffiths C."/>
            <person name="Grocock R."/>
            <person name="Gustafson E."/>
            <person name="Hammond S."/>
            <person name="Harley J.L."/>
            <person name="Hart E."/>
            <person name="Heath P.D."/>
            <person name="Ho T.P."/>
            <person name="Hopkins B."/>
            <person name="Horne J."/>
            <person name="Howden P.J."/>
            <person name="Huckle E."/>
            <person name="Hynds C."/>
            <person name="Johnson C."/>
            <person name="Johnson D."/>
            <person name="Kana A."/>
            <person name="Kay M."/>
            <person name="Kimberley A.M."/>
            <person name="Kershaw J.K."/>
            <person name="Kokkinaki M."/>
            <person name="Laird G.K."/>
            <person name="Lawlor S."/>
            <person name="Lee H.M."/>
            <person name="Leongamornlert D.A."/>
            <person name="Laird G."/>
            <person name="Lloyd C."/>
            <person name="Lloyd D.M."/>
            <person name="Loveland J."/>
            <person name="Lovell J."/>
            <person name="McLaren S."/>
            <person name="McLay K.E."/>
            <person name="McMurray A."/>
            <person name="Mashreghi-Mohammadi M."/>
            <person name="Matthews L."/>
            <person name="Milne S."/>
            <person name="Nickerson T."/>
            <person name="Nguyen M."/>
            <person name="Overton-Larty E."/>
            <person name="Palmer S.A."/>
            <person name="Pearce A.V."/>
            <person name="Peck A.I."/>
            <person name="Pelan S."/>
            <person name="Phillimore B."/>
            <person name="Porter K."/>
            <person name="Rice C.M."/>
            <person name="Rogosin A."/>
            <person name="Ross M.T."/>
            <person name="Sarafidou T."/>
            <person name="Sehra H.K."/>
            <person name="Shownkeen R."/>
            <person name="Skuce C.D."/>
            <person name="Smith M."/>
            <person name="Standring L."/>
            <person name="Sycamore N."/>
            <person name="Tester J."/>
            <person name="Thorpe A."/>
            <person name="Torcasso W."/>
            <person name="Tracey A."/>
            <person name="Tromans A."/>
            <person name="Tsolas J."/>
            <person name="Wall M."/>
            <person name="Walsh J."/>
            <person name="Wang H."/>
            <person name="Weinstock K."/>
            <person name="West A.P."/>
            <person name="Willey D.L."/>
            <person name="Whitehead S.L."/>
            <person name="Wilming L."/>
            <person name="Wray P.W."/>
            <person name="Young L."/>
            <person name="Chen Y."/>
            <person name="Lovering R.C."/>
            <person name="Moschonas N.K."/>
            <person name="Siebert R."/>
            <person name="Fechtel K."/>
            <person name="Bentley D."/>
            <person name="Durbin R.M."/>
            <person name="Hubbard T."/>
            <person name="Doucette-Stamm L."/>
            <person name="Beck S."/>
            <person name="Smith D.R."/>
            <person name="Rogers J."/>
        </authorList>
    </citation>
    <scope>NUCLEOTIDE SEQUENCE [LARGE SCALE GENOMIC DNA]</scope>
</reference>
<dbReference type="EMBL" id="AK295550">
    <property type="protein sequence ID" value="BAH12104.1"/>
    <property type="molecule type" value="mRNA"/>
</dbReference>
<dbReference type="EMBL" id="AL137026">
    <property type="status" value="NOT_ANNOTATED_CDS"/>
    <property type="molecule type" value="Genomic_DNA"/>
</dbReference>
<dbReference type="RefSeq" id="NP_001244929.1">
    <property type="nucleotide sequence ID" value="NM_001258000.1"/>
</dbReference>
<dbReference type="STRING" id="9606.ENSP00000479444"/>
<dbReference type="GlyGen" id="B7Z368">
    <property type="glycosylation" value="1 site, 1 O-linked glycan (1 site)"/>
</dbReference>
<dbReference type="iPTMnet" id="B7Z368"/>
<dbReference type="PhosphoSitePlus" id="B7Z368"/>
<dbReference type="BioMuta" id="C10orf142"/>
<dbReference type="PaxDb" id="9606-ENSP00000479444"/>
<dbReference type="UCSC" id="uc031pus.1">
    <property type="organism name" value="human"/>
</dbReference>
<dbReference type="AGR" id="HGNC:51236"/>
<dbReference type="GeneCards" id="LINC02881"/>
<dbReference type="HGNC" id="HGNC:51236">
    <property type="gene designation" value="LINC02881"/>
</dbReference>
<dbReference type="neXtProt" id="NX_B7Z368"/>
<dbReference type="eggNOG" id="ENOG502TJ7Y">
    <property type="taxonomic scope" value="Eukaryota"/>
</dbReference>
<dbReference type="HOGENOM" id="CLU_1937386_0_0_1"/>
<dbReference type="InParanoid" id="B7Z368"/>
<dbReference type="PAN-GO" id="B7Z368">
    <property type="GO annotations" value="0 GO annotations based on evolutionary models"/>
</dbReference>
<dbReference type="PathwayCommons" id="B7Z368"/>
<dbReference type="BioGRID-ORCS" id="100130539">
    <property type="hits" value="5 hits in 219 CRISPR screens"/>
</dbReference>
<dbReference type="GenomeRNAi" id="100130539"/>
<dbReference type="Pharos" id="B7Z368">
    <property type="development level" value="Tdark"/>
</dbReference>
<dbReference type="Proteomes" id="UP000005640">
    <property type="component" value="Chromosome 10"/>
</dbReference>
<dbReference type="RNAct" id="B7Z368">
    <property type="molecule type" value="protein"/>
</dbReference>
<dbReference type="InterPro" id="IPR041059">
    <property type="entry name" value="DUF5558"/>
</dbReference>
<dbReference type="Pfam" id="PF17713">
    <property type="entry name" value="DUF5558"/>
    <property type="match status" value="1"/>
</dbReference>
<sequence length="130" mass="13757">MRMYSSDAHERPPSPSLGTTPPHPLPPTGSPRPRQDSAAGNSEEREPRGLRRASGVGSSCKRPTVCMGRQQGLPFCTVCGYRCSSPERTRGRCAVGKVRVAGGGGAPGGGAGMRCCGCRERNINKELELF</sequence>